<gene>
    <name evidence="1" type="primary">hscA</name>
    <name type="ordered locus">Shew_2313</name>
</gene>
<dbReference type="EMBL" id="CP000606">
    <property type="protein sequence ID" value="ABO24179.1"/>
    <property type="molecule type" value="Genomic_DNA"/>
</dbReference>
<dbReference type="RefSeq" id="WP_011866110.1">
    <property type="nucleotide sequence ID" value="NC_009092.1"/>
</dbReference>
<dbReference type="SMR" id="A3QFD1"/>
<dbReference type="STRING" id="323850.Shew_2313"/>
<dbReference type="KEGG" id="slo:Shew_2313"/>
<dbReference type="eggNOG" id="COG0443">
    <property type="taxonomic scope" value="Bacteria"/>
</dbReference>
<dbReference type="HOGENOM" id="CLU_005965_2_1_6"/>
<dbReference type="OrthoDB" id="9766019at2"/>
<dbReference type="Proteomes" id="UP000001558">
    <property type="component" value="Chromosome"/>
</dbReference>
<dbReference type="GO" id="GO:0005524">
    <property type="term" value="F:ATP binding"/>
    <property type="evidence" value="ECO:0007669"/>
    <property type="project" value="UniProtKB-KW"/>
</dbReference>
<dbReference type="GO" id="GO:0016887">
    <property type="term" value="F:ATP hydrolysis activity"/>
    <property type="evidence" value="ECO:0007669"/>
    <property type="project" value="UniProtKB-UniRule"/>
</dbReference>
<dbReference type="GO" id="GO:0140662">
    <property type="term" value="F:ATP-dependent protein folding chaperone"/>
    <property type="evidence" value="ECO:0007669"/>
    <property type="project" value="InterPro"/>
</dbReference>
<dbReference type="GO" id="GO:0051082">
    <property type="term" value="F:unfolded protein binding"/>
    <property type="evidence" value="ECO:0007669"/>
    <property type="project" value="InterPro"/>
</dbReference>
<dbReference type="GO" id="GO:0016226">
    <property type="term" value="P:iron-sulfur cluster assembly"/>
    <property type="evidence" value="ECO:0007669"/>
    <property type="project" value="InterPro"/>
</dbReference>
<dbReference type="FunFam" id="3.30.420.40:FF:000046">
    <property type="entry name" value="Chaperone protein HscA"/>
    <property type="match status" value="1"/>
</dbReference>
<dbReference type="FunFam" id="2.60.34.10:FF:000005">
    <property type="entry name" value="Chaperone protein HscA homolog"/>
    <property type="match status" value="1"/>
</dbReference>
<dbReference type="Gene3D" id="1.20.1270.10">
    <property type="match status" value="1"/>
</dbReference>
<dbReference type="Gene3D" id="3.30.420.40">
    <property type="match status" value="2"/>
</dbReference>
<dbReference type="Gene3D" id="3.90.640.10">
    <property type="entry name" value="Actin, Chain A, domain 4"/>
    <property type="match status" value="1"/>
</dbReference>
<dbReference type="Gene3D" id="2.60.34.10">
    <property type="entry name" value="Substrate Binding Domain Of DNAk, Chain A, domain 1"/>
    <property type="match status" value="1"/>
</dbReference>
<dbReference type="HAMAP" id="MF_00679">
    <property type="entry name" value="HscA"/>
    <property type="match status" value="1"/>
</dbReference>
<dbReference type="InterPro" id="IPR043129">
    <property type="entry name" value="ATPase_NBD"/>
</dbReference>
<dbReference type="InterPro" id="IPR018181">
    <property type="entry name" value="Heat_shock_70_CS"/>
</dbReference>
<dbReference type="InterPro" id="IPR029048">
    <property type="entry name" value="HSP70_C_sf"/>
</dbReference>
<dbReference type="InterPro" id="IPR029047">
    <property type="entry name" value="HSP70_peptide-bd_sf"/>
</dbReference>
<dbReference type="InterPro" id="IPR013126">
    <property type="entry name" value="Hsp_70_fam"/>
</dbReference>
<dbReference type="InterPro" id="IPR010236">
    <property type="entry name" value="ISC_FeS_clus_asmbl_HscA"/>
</dbReference>
<dbReference type="NCBIfam" id="TIGR01991">
    <property type="entry name" value="HscA"/>
    <property type="match status" value="1"/>
</dbReference>
<dbReference type="NCBIfam" id="NF003520">
    <property type="entry name" value="PRK05183.1"/>
    <property type="match status" value="1"/>
</dbReference>
<dbReference type="PANTHER" id="PTHR19375">
    <property type="entry name" value="HEAT SHOCK PROTEIN 70KDA"/>
    <property type="match status" value="1"/>
</dbReference>
<dbReference type="Pfam" id="PF00012">
    <property type="entry name" value="HSP70"/>
    <property type="match status" value="1"/>
</dbReference>
<dbReference type="PRINTS" id="PR00301">
    <property type="entry name" value="HEATSHOCK70"/>
</dbReference>
<dbReference type="SUPFAM" id="SSF53067">
    <property type="entry name" value="Actin-like ATPase domain"/>
    <property type="match status" value="2"/>
</dbReference>
<dbReference type="SUPFAM" id="SSF100934">
    <property type="entry name" value="Heat shock protein 70kD (HSP70), C-terminal subdomain"/>
    <property type="match status" value="1"/>
</dbReference>
<dbReference type="SUPFAM" id="SSF100920">
    <property type="entry name" value="Heat shock protein 70kD (HSP70), peptide-binding domain"/>
    <property type="match status" value="1"/>
</dbReference>
<dbReference type="PROSITE" id="PS00297">
    <property type="entry name" value="HSP70_1"/>
    <property type="match status" value="1"/>
</dbReference>
<dbReference type="PROSITE" id="PS00329">
    <property type="entry name" value="HSP70_2"/>
    <property type="match status" value="1"/>
</dbReference>
<protein>
    <recommendedName>
        <fullName evidence="1">Chaperone protein HscA homolog</fullName>
    </recommendedName>
</protein>
<keyword id="KW-0067">ATP-binding</keyword>
<keyword id="KW-0143">Chaperone</keyword>
<keyword id="KW-0547">Nucleotide-binding</keyword>
<keyword id="KW-1185">Reference proteome</keyword>
<feature type="chain" id="PRO_1000044889" description="Chaperone protein HscA homolog">
    <location>
        <begin position="1"/>
        <end position="620"/>
    </location>
</feature>
<accession>A3QFD1</accession>
<organism>
    <name type="scientific">Shewanella loihica (strain ATCC BAA-1088 / PV-4)</name>
    <dbReference type="NCBI Taxonomy" id="323850"/>
    <lineage>
        <taxon>Bacteria</taxon>
        <taxon>Pseudomonadati</taxon>
        <taxon>Pseudomonadota</taxon>
        <taxon>Gammaproteobacteria</taxon>
        <taxon>Alteromonadales</taxon>
        <taxon>Shewanellaceae</taxon>
        <taxon>Shewanella</taxon>
    </lineage>
</organism>
<reference key="1">
    <citation type="submission" date="2007-03" db="EMBL/GenBank/DDBJ databases">
        <title>Complete sequence of Shewanella loihica PV-4.</title>
        <authorList>
            <consortium name="US DOE Joint Genome Institute"/>
            <person name="Copeland A."/>
            <person name="Lucas S."/>
            <person name="Lapidus A."/>
            <person name="Barry K."/>
            <person name="Detter J.C."/>
            <person name="Glavina del Rio T."/>
            <person name="Hammon N."/>
            <person name="Israni S."/>
            <person name="Dalin E."/>
            <person name="Tice H."/>
            <person name="Pitluck S."/>
            <person name="Chain P."/>
            <person name="Malfatti S."/>
            <person name="Shin M."/>
            <person name="Vergez L."/>
            <person name="Schmutz J."/>
            <person name="Larimer F."/>
            <person name="Land M."/>
            <person name="Hauser L."/>
            <person name="Kyrpides N."/>
            <person name="Mikhailova N."/>
            <person name="Romine M.F."/>
            <person name="Serres G."/>
            <person name="Fredrickson J."/>
            <person name="Tiedje J."/>
            <person name="Richardson P."/>
        </authorList>
    </citation>
    <scope>NUCLEOTIDE SEQUENCE [LARGE SCALE GENOMIC DNA]</scope>
    <source>
        <strain>ATCC BAA-1088 / PV-4</strain>
    </source>
</reference>
<proteinExistence type="inferred from homology"/>
<sequence>MALLQIAEPGQSAAPHQHRLAVGIDLGTTNSLVAAVRSGVADTLADESGRHALASVVRYSEDGVQVGVDAERFSAQDPLNTVVSVKRFMGRSLSDIQAKDASLPYNFSASENGLPLFNTQAGQFNPIQISADILRPLVDRAEKTLGGSLEGVVITVPAYFDDAQRQGTKEAASLLGVKVLRLLNEPTAAAIAYGLDSGQEGVIAIYDLGGGTFDISILRLNKGVFEVLATGGDSALGGDDFDHALAAHLQESWQLTSLTASERRALLIESRRVKEALTEQASVTASLTLEQGIVHEQVVDKAQFDALIESLVKKTIASCRRALRDAAISNDEVLETVMVGGSTRVPLVRERVEGFFGKAPLTSIDPDRVVAIGAAIQADILVGNKPESDLLLLDVIPLSLGIETMGGLVEKVVSRNTTIPVARAQEFTTFKDGQTAMAFHVVQGERELVADCRSLARFTLKGIPPMAAGAAHIRVTFQVDADGLLSVTAMEKSSGVQASIQVKPSFGLTDEEIGTMLKDSMAHAKEDIERRMLAEQQVEAARVLESLSAALAKDGDLLDEAEAATIQAGMANLAQVASQSDTDAIEKAIAALDDASQDFAAKRMDNSIRLALKGQSVDNI</sequence>
<evidence type="ECO:0000255" key="1">
    <source>
        <dbReference type="HAMAP-Rule" id="MF_00679"/>
    </source>
</evidence>
<name>HSCA_SHELP</name>
<comment type="function">
    <text evidence="1">Chaperone involved in the maturation of iron-sulfur cluster-containing proteins. Has a low intrinsic ATPase activity which is markedly stimulated by HscB.</text>
</comment>
<comment type="similarity">
    <text evidence="1">Belongs to the heat shock protein 70 family.</text>
</comment>